<proteinExistence type="inferred from homology"/>
<organism>
    <name type="scientific">Escherichia coli (strain K12 / MC4100 / BW2952)</name>
    <dbReference type="NCBI Taxonomy" id="595496"/>
    <lineage>
        <taxon>Bacteria</taxon>
        <taxon>Pseudomonadati</taxon>
        <taxon>Pseudomonadota</taxon>
        <taxon>Gammaproteobacteria</taxon>
        <taxon>Enterobacterales</taxon>
        <taxon>Enterobacteriaceae</taxon>
        <taxon>Escherichia</taxon>
    </lineage>
</organism>
<gene>
    <name evidence="1" type="primary">ydiU</name>
    <name evidence="1" type="synonym">selO</name>
    <name type="ordered locus">BWG_1520</name>
</gene>
<evidence type="ECO:0000255" key="1">
    <source>
        <dbReference type="HAMAP-Rule" id="MF_00692"/>
    </source>
</evidence>
<comment type="function">
    <text evidence="1">Nucleotidyltransferase involved in the post-translational modification of proteins. It can catalyze the addition of adenosine monophosphate (AMP) or uridine monophosphate (UMP) to a protein, resulting in modifications known as AMPylation and UMPylation.</text>
</comment>
<comment type="catalytic activity">
    <reaction evidence="1">
        <text>L-seryl-[protein] + ATP = 3-O-(5'-adenylyl)-L-seryl-[protein] + diphosphate</text>
        <dbReference type="Rhea" id="RHEA:58120"/>
        <dbReference type="Rhea" id="RHEA-COMP:9863"/>
        <dbReference type="Rhea" id="RHEA-COMP:15073"/>
        <dbReference type="ChEBI" id="CHEBI:29999"/>
        <dbReference type="ChEBI" id="CHEBI:30616"/>
        <dbReference type="ChEBI" id="CHEBI:33019"/>
        <dbReference type="ChEBI" id="CHEBI:142516"/>
        <dbReference type="EC" id="2.7.7.108"/>
    </reaction>
</comment>
<comment type="catalytic activity">
    <reaction evidence="1">
        <text>L-threonyl-[protein] + ATP = 3-O-(5'-adenylyl)-L-threonyl-[protein] + diphosphate</text>
        <dbReference type="Rhea" id="RHEA:54292"/>
        <dbReference type="Rhea" id="RHEA-COMP:11060"/>
        <dbReference type="Rhea" id="RHEA-COMP:13847"/>
        <dbReference type="ChEBI" id="CHEBI:30013"/>
        <dbReference type="ChEBI" id="CHEBI:30616"/>
        <dbReference type="ChEBI" id="CHEBI:33019"/>
        <dbReference type="ChEBI" id="CHEBI:138113"/>
        <dbReference type="EC" id="2.7.7.108"/>
    </reaction>
</comment>
<comment type="catalytic activity">
    <reaction evidence="1">
        <text>L-tyrosyl-[protein] + ATP = O-(5'-adenylyl)-L-tyrosyl-[protein] + diphosphate</text>
        <dbReference type="Rhea" id="RHEA:54288"/>
        <dbReference type="Rhea" id="RHEA-COMP:10136"/>
        <dbReference type="Rhea" id="RHEA-COMP:13846"/>
        <dbReference type="ChEBI" id="CHEBI:30616"/>
        <dbReference type="ChEBI" id="CHEBI:33019"/>
        <dbReference type="ChEBI" id="CHEBI:46858"/>
        <dbReference type="ChEBI" id="CHEBI:83624"/>
        <dbReference type="EC" id="2.7.7.108"/>
    </reaction>
</comment>
<comment type="catalytic activity">
    <reaction evidence="1">
        <text>L-histidyl-[protein] + UTP = N(tele)-(5'-uridylyl)-L-histidyl-[protein] + diphosphate</text>
        <dbReference type="Rhea" id="RHEA:83891"/>
        <dbReference type="Rhea" id="RHEA-COMP:9745"/>
        <dbReference type="Rhea" id="RHEA-COMP:20239"/>
        <dbReference type="ChEBI" id="CHEBI:29979"/>
        <dbReference type="ChEBI" id="CHEBI:33019"/>
        <dbReference type="ChEBI" id="CHEBI:46398"/>
        <dbReference type="ChEBI" id="CHEBI:233474"/>
    </reaction>
</comment>
<comment type="catalytic activity">
    <reaction evidence="1">
        <text>L-seryl-[protein] + UTP = O-(5'-uridylyl)-L-seryl-[protein] + diphosphate</text>
        <dbReference type="Rhea" id="RHEA:64604"/>
        <dbReference type="Rhea" id="RHEA-COMP:9863"/>
        <dbReference type="Rhea" id="RHEA-COMP:16635"/>
        <dbReference type="ChEBI" id="CHEBI:29999"/>
        <dbReference type="ChEBI" id="CHEBI:33019"/>
        <dbReference type="ChEBI" id="CHEBI:46398"/>
        <dbReference type="ChEBI" id="CHEBI:156051"/>
    </reaction>
</comment>
<comment type="catalytic activity">
    <reaction evidence="1">
        <text>L-tyrosyl-[protein] + UTP = O-(5'-uridylyl)-L-tyrosyl-[protein] + diphosphate</text>
        <dbReference type="Rhea" id="RHEA:83887"/>
        <dbReference type="Rhea" id="RHEA-COMP:10136"/>
        <dbReference type="Rhea" id="RHEA-COMP:20238"/>
        <dbReference type="ChEBI" id="CHEBI:33019"/>
        <dbReference type="ChEBI" id="CHEBI:46398"/>
        <dbReference type="ChEBI" id="CHEBI:46858"/>
        <dbReference type="ChEBI" id="CHEBI:90602"/>
    </reaction>
</comment>
<comment type="cofactor">
    <cofactor evidence="1">
        <name>Mg(2+)</name>
        <dbReference type="ChEBI" id="CHEBI:18420"/>
    </cofactor>
    <cofactor evidence="1">
        <name>Mn(2+)</name>
        <dbReference type="ChEBI" id="CHEBI:29035"/>
    </cofactor>
</comment>
<comment type="similarity">
    <text evidence="1">Belongs to the SELO family.</text>
</comment>
<accession>C4ZYG8</accession>
<reference key="1">
    <citation type="journal article" date="2009" name="J. Bacteriol.">
        <title>Genomic sequencing reveals regulatory mutations and recombinational events in the widely used MC4100 lineage of Escherichia coli K-12.</title>
        <authorList>
            <person name="Ferenci T."/>
            <person name="Zhou Z."/>
            <person name="Betteridge T."/>
            <person name="Ren Y."/>
            <person name="Liu Y."/>
            <person name="Feng L."/>
            <person name="Reeves P.R."/>
            <person name="Wang L."/>
        </authorList>
    </citation>
    <scope>NUCLEOTIDE SEQUENCE [LARGE SCALE GENOMIC DNA]</scope>
    <source>
        <strain>K12 / MC4100 / BW2952</strain>
    </source>
</reference>
<dbReference type="EC" id="2.7.7.-" evidence="1"/>
<dbReference type="EC" id="2.7.7.108" evidence="1"/>
<dbReference type="EMBL" id="CP001396">
    <property type="protein sequence ID" value="ACR62319.1"/>
    <property type="molecule type" value="Genomic_DNA"/>
</dbReference>
<dbReference type="RefSeq" id="WP_000175703.1">
    <property type="nucleotide sequence ID" value="NC_012759.1"/>
</dbReference>
<dbReference type="SMR" id="C4ZYG8"/>
<dbReference type="KEGG" id="ebw:BWG_1520"/>
<dbReference type="HOGENOM" id="CLU_010245_4_1_6"/>
<dbReference type="GO" id="GO:0070733">
    <property type="term" value="F:AMPylase activity"/>
    <property type="evidence" value="ECO:0007669"/>
    <property type="project" value="RHEA"/>
</dbReference>
<dbReference type="GO" id="GO:0005524">
    <property type="term" value="F:ATP binding"/>
    <property type="evidence" value="ECO:0007669"/>
    <property type="project" value="UniProtKB-UniRule"/>
</dbReference>
<dbReference type="GO" id="GO:0000287">
    <property type="term" value="F:magnesium ion binding"/>
    <property type="evidence" value="ECO:0007669"/>
    <property type="project" value="UniProtKB-UniRule"/>
</dbReference>
<dbReference type="HAMAP" id="MF_00692">
    <property type="entry name" value="YdiU_SelO"/>
    <property type="match status" value="1"/>
</dbReference>
<dbReference type="InterPro" id="IPR054838">
    <property type="entry name" value="adnlytase_SelO"/>
</dbReference>
<dbReference type="InterPro" id="IPR003846">
    <property type="entry name" value="SelO"/>
</dbReference>
<dbReference type="NCBIfam" id="NF040880">
    <property type="entry name" value="adnlytase_SelO"/>
    <property type="match status" value="1"/>
</dbReference>
<dbReference type="NCBIfam" id="NF000658">
    <property type="entry name" value="PRK00029.1"/>
    <property type="match status" value="1"/>
</dbReference>
<dbReference type="PANTHER" id="PTHR32057">
    <property type="entry name" value="PROTEIN ADENYLYLTRANSFERASE SELO, MITOCHONDRIAL"/>
    <property type="match status" value="1"/>
</dbReference>
<dbReference type="PANTHER" id="PTHR32057:SF14">
    <property type="entry name" value="PROTEIN ADENYLYLTRANSFERASE SELO, MITOCHONDRIAL"/>
    <property type="match status" value="1"/>
</dbReference>
<dbReference type="Pfam" id="PF02696">
    <property type="entry name" value="SelO"/>
    <property type="match status" value="1"/>
</dbReference>
<sequence>MTLSFVTRWRDELPETYTALSPTPLNNARLIWHNTELANTLSIPSSLFKNGAGVWGGEALLPGMSPLAQVYSGHQFGVWAGQLGDGRGILLGEQLLADGTTMDWHLKGAGLTPYSRMGDGRAVLRSTIRESLASEAMHYLGIPTTRALSIVTSDSPVYRETAEPGAMLMRVAPSHLRFGHFEHFYYRRESEKVRQLADFAIRHYWSHLADDEDKYRLWFSDVVARTASLIAQWQTVGFAHGVMNTDNMSLLGLTLDYGPFGFLDDYEPGFICNHSDHQGRYSFDNQPAVALWNLQRLAQTLSPFVAVDALNEALDSYQQVLLTHYGERMRQKLGFMTEQKEDNALLNELFSLMARERSDYTRTFRMLSLTEQHSAASPLRDEFIDRAAFDDWFARYRGRLQQDEVSDSERQQLMQSVNPALVLRNWLAQRAIEAAEKGDMTELHRLHEALRNPFSDRDDDYVSRPPDWGKRLEVSCSS</sequence>
<name>SELO_ECOBW</name>
<feature type="chain" id="PRO_1000212590" description="Protein nucleotidyltransferase YdiU">
    <location>
        <begin position="1"/>
        <end position="478"/>
    </location>
</feature>
<feature type="active site" description="Proton acceptor" evidence="1">
    <location>
        <position position="246"/>
    </location>
</feature>
<feature type="binding site" evidence="1">
    <location>
        <position position="84"/>
    </location>
    <ligand>
        <name>ATP</name>
        <dbReference type="ChEBI" id="CHEBI:30616"/>
    </ligand>
</feature>
<feature type="binding site" evidence="1">
    <location>
        <position position="86"/>
    </location>
    <ligand>
        <name>ATP</name>
        <dbReference type="ChEBI" id="CHEBI:30616"/>
    </ligand>
</feature>
<feature type="binding site" evidence="1">
    <location>
        <position position="87"/>
    </location>
    <ligand>
        <name>ATP</name>
        <dbReference type="ChEBI" id="CHEBI:30616"/>
    </ligand>
</feature>
<feature type="binding site" evidence="1">
    <location>
        <position position="107"/>
    </location>
    <ligand>
        <name>ATP</name>
        <dbReference type="ChEBI" id="CHEBI:30616"/>
    </ligand>
</feature>
<feature type="binding site" evidence="1">
    <location>
        <position position="119"/>
    </location>
    <ligand>
        <name>ATP</name>
        <dbReference type="ChEBI" id="CHEBI:30616"/>
    </ligand>
</feature>
<feature type="binding site" evidence="1">
    <location>
        <position position="120"/>
    </location>
    <ligand>
        <name>ATP</name>
        <dbReference type="ChEBI" id="CHEBI:30616"/>
    </ligand>
</feature>
<feature type="binding site" evidence="1">
    <location>
        <position position="170"/>
    </location>
    <ligand>
        <name>ATP</name>
        <dbReference type="ChEBI" id="CHEBI:30616"/>
    </ligand>
</feature>
<feature type="binding site" evidence="1">
    <location>
        <position position="177"/>
    </location>
    <ligand>
        <name>ATP</name>
        <dbReference type="ChEBI" id="CHEBI:30616"/>
    </ligand>
</feature>
<feature type="binding site" evidence="1">
    <location>
        <position position="247"/>
    </location>
    <ligand>
        <name>Mg(2+)</name>
        <dbReference type="ChEBI" id="CHEBI:18420"/>
    </ligand>
</feature>
<feature type="binding site" evidence="1">
    <location>
        <position position="256"/>
    </location>
    <ligand>
        <name>ATP</name>
        <dbReference type="ChEBI" id="CHEBI:30616"/>
    </ligand>
</feature>
<feature type="binding site" evidence="1">
    <location>
        <position position="256"/>
    </location>
    <ligand>
        <name>Mg(2+)</name>
        <dbReference type="ChEBI" id="CHEBI:18420"/>
    </ligand>
</feature>
<protein>
    <recommendedName>
        <fullName evidence="1">Protein nucleotidyltransferase YdiU</fullName>
        <ecNumber evidence="1">2.7.7.-</ecNumber>
    </recommendedName>
    <alternativeName>
        <fullName evidence="1">Protein adenylyltransferase YdiU</fullName>
        <ecNumber evidence="1">2.7.7.108</ecNumber>
    </alternativeName>
    <alternativeName>
        <fullName evidence="1">Protein uridylyltransferase YdiU</fullName>
        <ecNumber evidence="1">2.7.7.-</ecNumber>
    </alternativeName>
</protein>
<keyword id="KW-0067">ATP-binding</keyword>
<keyword id="KW-0460">Magnesium</keyword>
<keyword id="KW-0464">Manganese</keyword>
<keyword id="KW-0479">Metal-binding</keyword>
<keyword id="KW-0547">Nucleotide-binding</keyword>
<keyword id="KW-0548">Nucleotidyltransferase</keyword>
<keyword id="KW-0808">Transferase</keyword>